<feature type="chain" id="PRO_0000292959" description="Sulfite reductase [NADPH] hemoprotein beta-component">
    <location>
        <begin position="1"/>
        <end position="575"/>
    </location>
</feature>
<feature type="binding site" evidence="1">
    <location>
        <position position="439"/>
    </location>
    <ligand>
        <name>[4Fe-4S] cluster</name>
        <dbReference type="ChEBI" id="CHEBI:49883"/>
    </ligand>
</feature>
<feature type="binding site" evidence="1">
    <location>
        <position position="445"/>
    </location>
    <ligand>
        <name>[4Fe-4S] cluster</name>
        <dbReference type="ChEBI" id="CHEBI:49883"/>
    </ligand>
</feature>
<feature type="binding site" evidence="1">
    <location>
        <position position="484"/>
    </location>
    <ligand>
        <name>[4Fe-4S] cluster</name>
        <dbReference type="ChEBI" id="CHEBI:49883"/>
    </ligand>
</feature>
<feature type="binding site" evidence="1">
    <location>
        <position position="488"/>
    </location>
    <ligand>
        <name>[4Fe-4S] cluster</name>
        <dbReference type="ChEBI" id="CHEBI:49883"/>
    </ligand>
</feature>
<feature type="binding site" description="axial binding residue" evidence="1">
    <location>
        <position position="488"/>
    </location>
    <ligand>
        <name>siroheme</name>
        <dbReference type="ChEBI" id="CHEBI:60052"/>
    </ligand>
    <ligandPart>
        <name>Fe</name>
        <dbReference type="ChEBI" id="CHEBI:18248"/>
    </ligandPart>
</feature>
<evidence type="ECO:0000255" key="1">
    <source>
        <dbReference type="HAMAP-Rule" id="MF_01540"/>
    </source>
</evidence>
<protein>
    <recommendedName>
        <fullName evidence="1">Sulfite reductase [NADPH] hemoprotein beta-component</fullName>
        <shortName evidence="1">SiR-HP</shortName>
        <shortName evidence="1">SiRHP</shortName>
        <ecNumber evidence="1">1.8.1.2</ecNumber>
    </recommendedName>
</protein>
<comment type="function">
    <text evidence="1">Component of the sulfite reductase complex that catalyzes the 6-electron reduction of sulfite to sulfide. This is one of several activities required for the biosynthesis of L-cysteine from sulfate.</text>
</comment>
<comment type="catalytic activity">
    <reaction evidence="1">
        <text>hydrogen sulfide + 3 NADP(+) + 3 H2O = sulfite + 3 NADPH + 4 H(+)</text>
        <dbReference type="Rhea" id="RHEA:13801"/>
        <dbReference type="ChEBI" id="CHEBI:15377"/>
        <dbReference type="ChEBI" id="CHEBI:15378"/>
        <dbReference type="ChEBI" id="CHEBI:17359"/>
        <dbReference type="ChEBI" id="CHEBI:29919"/>
        <dbReference type="ChEBI" id="CHEBI:57783"/>
        <dbReference type="ChEBI" id="CHEBI:58349"/>
        <dbReference type="EC" id="1.8.1.2"/>
    </reaction>
</comment>
<comment type="cofactor">
    <cofactor evidence="1">
        <name>siroheme</name>
        <dbReference type="ChEBI" id="CHEBI:60052"/>
    </cofactor>
    <text evidence="1">Binds 1 siroheme per subunit.</text>
</comment>
<comment type="cofactor">
    <cofactor evidence="1">
        <name>[4Fe-4S] cluster</name>
        <dbReference type="ChEBI" id="CHEBI:49883"/>
    </cofactor>
    <text evidence="1">Binds 1 [4Fe-4S] cluster per subunit.</text>
</comment>
<comment type="pathway">
    <text evidence="1">Sulfur metabolism; hydrogen sulfide biosynthesis; hydrogen sulfide from sulfite (NADPH route): step 1/1.</text>
</comment>
<comment type="subunit">
    <text evidence="1">Alpha(8)-beta(8). The alpha component is a flavoprotein, the beta component is a hemoprotein.</text>
</comment>
<comment type="similarity">
    <text evidence="1">Belongs to the nitrite and sulfite reductase 4Fe-4S domain family.</text>
</comment>
<organism>
    <name type="scientific">Blochmanniella pennsylvanica (strain BPEN)</name>
    <dbReference type="NCBI Taxonomy" id="291272"/>
    <lineage>
        <taxon>Bacteria</taxon>
        <taxon>Pseudomonadati</taxon>
        <taxon>Pseudomonadota</taxon>
        <taxon>Gammaproteobacteria</taxon>
        <taxon>Enterobacterales</taxon>
        <taxon>Enterobacteriaceae</taxon>
        <taxon>ant endosymbionts</taxon>
        <taxon>Candidatus Blochmanniella</taxon>
    </lineage>
</organism>
<sequence>MNRKYDNNNDKNIPLLSDNERIKKESNFLRGTIAQNLDNNLTGGFNTEDAQLIRFHGMYQQDDRDVRVERANQKLEPLINMMLRCRLPGGVIMPQQWLAIDDFSEKYTLYGTIRLTTRQTFQLHGLLKPNLKNVHRLLNKLGLDSIATAGDVNRNVICTANPMESTLHYQVWELAKSISSYLLPKSNAYAEIWLDSKKTESTDSEPILSATYLPRKFKIAIAIPPINDVDVHANDLSFIAIKSENTDQIIGFNVLVGGGLAMTYGDITTYPRKASAFGYISTKDVLKIAETVVTVQRDWGNRSDRRHAKTKYTLTRVGVTTFKSEVERRSGVQFHPIRPYVFTDRGDRFGWVQGIDDYWHLTLFIENGRISNNDPHKLLKRGIAEVAQIHSGSFRLTANQNLIISGVSKDNKLMIESTLRKYGVINDDITPQRKASMACVAFPTCPLAMAEAERFLPKFVTKIEHIMSKYRLEKDAIILRVTGCPNSCARAMLSEIGLTGRSIGRYNLYLGGNNIGTRIPRLYKENITENDILNILDTTISRWAQERNSQESYGDYVVRSGIVNAVINSEKDFYE</sequence>
<gene>
    <name evidence="1" type="primary">cysI</name>
    <name type="ordered locus">BPEN_164</name>
</gene>
<reference key="1">
    <citation type="journal article" date="2005" name="Genome Res.">
        <title>Genome sequence of Blochmannia pennsylvanicus indicates parallel evolutionary trends among bacterial mutualists of insects.</title>
        <authorList>
            <person name="Degnan P.H."/>
            <person name="Lazarus A.B."/>
            <person name="Wernegreen J.J."/>
        </authorList>
    </citation>
    <scope>NUCLEOTIDE SEQUENCE [LARGE SCALE GENOMIC DNA]</scope>
    <source>
        <strain>BPEN</strain>
    </source>
</reference>
<name>CYSI_BLOPB</name>
<accession>Q493N3</accession>
<dbReference type="EC" id="1.8.1.2" evidence="1"/>
<dbReference type="EMBL" id="CP000016">
    <property type="protein sequence ID" value="AAZ40804.1"/>
    <property type="molecule type" value="Genomic_DNA"/>
</dbReference>
<dbReference type="RefSeq" id="WP_011282711.1">
    <property type="nucleotide sequence ID" value="NC_007292.1"/>
</dbReference>
<dbReference type="SMR" id="Q493N3"/>
<dbReference type="STRING" id="291272.BPEN_164"/>
<dbReference type="KEGG" id="bpn:BPEN_164"/>
<dbReference type="eggNOG" id="COG0155">
    <property type="taxonomic scope" value="Bacteria"/>
</dbReference>
<dbReference type="HOGENOM" id="CLU_001975_3_2_6"/>
<dbReference type="OrthoDB" id="3189055at2"/>
<dbReference type="UniPathway" id="UPA00140">
    <property type="reaction ID" value="UER00207"/>
</dbReference>
<dbReference type="Proteomes" id="UP000007794">
    <property type="component" value="Chromosome"/>
</dbReference>
<dbReference type="GO" id="GO:0009337">
    <property type="term" value="C:sulfite reductase complex (NADPH)"/>
    <property type="evidence" value="ECO:0007669"/>
    <property type="project" value="InterPro"/>
</dbReference>
<dbReference type="GO" id="GO:0051539">
    <property type="term" value="F:4 iron, 4 sulfur cluster binding"/>
    <property type="evidence" value="ECO:0007669"/>
    <property type="project" value="UniProtKB-KW"/>
</dbReference>
<dbReference type="GO" id="GO:0020037">
    <property type="term" value="F:heme binding"/>
    <property type="evidence" value="ECO:0007669"/>
    <property type="project" value="InterPro"/>
</dbReference>
<dbReference type="GO" id="GO:0046872">
    <property type="term" value="F:metal ion binding"/>
    <property type="evidence" value="ECO:0007669"/>
    <property type="project" value="UniProtKB-KW"/>
</dbReference>
<dbReference type="GO" id="GO:0050661">
    <property type="term" value="F:NADP binding"/>
    <property type="evidence" value="ECO:0007669"/>
    <property type="project" value="InterPro"/>
</dbReference>
<dbReference type="GO" id="GO:0050311">
    <property type="term" value="F:sulfite reductase (ferredoxin) activity"/>
    <property type="evidence" value="ECO:0007669"/>
    <property type="project" value="TreeGrafter"/>
</dbReference>
<dbReference type="GO" id="GO:0004783">
    <property type="term" value="F:sulfite reductase (NADPH) activity"/>
    <property type="evidence" value="ECO:0007669"/>
    <property type="project" value="UniProtKB-UniRule"/>
</dbReference>
<dbReference type="GO" id="GO:0019344">
    <property type="term" value="P:cysteine biosynthetic process"/>
    <property type="evidence" value="ECO:0007669"/>
    <property type="project" value="UniProtKB-KW"/>
</dbReference>
<dbReference type="GO" id="GO:0070814">
    <property type="term" value="P:hydrogen sulfide biosynthetic process"/>
    <property type="evidence" value="ECO:0007669"/>
    <property type="project" value="UniProtKB-UniRule"/>
</dbReference>
<dbReference type="GO" id="GO:0000103">
    <property type="term" value="P:sulfate assimilation"/>
    <property type="evidence" value="ECO:0007669"/>
    <property type="project" value="UniProtKB-UniRule"/>
</dbReference>
<dbReference type="FunFam" id="3.30.413.10:FF:000003">
    <property type="entry name" value="Sulfite reductase [NADPH] hemoprotein beta-component"/>
    <property type="match status" value="1"/>
</dbReference>
<dbReference type="Gene3D" id="3.30.413.10">
    <property type="entry name" value="Sulfite Reductase Hemoprotein, domain 1"/>
    <property type="match status" value="2"/>
</dbReference>
<dbReference type="HAMAP" id="MF_01540">
    <property type="entry name" value="CysI"/>
    <property type="match status" value="1"/>
</dbReference>
<dbReference type="InterPro" id="IPR011786">
    <property type="entry name" value="CysI"/>
</dbReference>
<dbReference type="InterPro" id="IPR005117">
    <property type="entry name" value="NiRdtase/SiRdtase_haem-b_fer"/>
</dbReference>
<dbReference type="InterPro" id="IPR036136">
    <property type="entry name" value="Nit/Sulf_reduc_fer-like_dom_sf"/>
</dbReference>
<dbReference type="InterPro" id="IPR006067">
    <property type="entry name" value="NO2/SO3_Rdtase_4Fe4S_dom"/>
</dbReference>
<dbReference type="InterPro" id="IPR045169">
    <property type="entry name" value="NO2/SO3_Rdtase_4Fe4S_prot"/>
</dbReference>
<dbReference type="InterPro" id="IPR045854">
    <property type="entry name" value="NO2/SO3_Rdtase_4Fe4S_sf"/>
</dbReference>
<dbReference type="InterPro" id="IPR006066">
    <property type="entry name" value="NO2/SO3_Rdtase_FeS/sirohaem_BS"/>
</dbReference>
<dbReference type="NCBIfam" id="TIGR02041">
    <property type="entry name" value="CysI"/>
    <property type="match status" value="1"/>
</dbReference>
<dbReference type="NCBIfam" id="NF010029">
    <property type="entry name" value="PRK13504.1"/>
    <property type="match status" value="1"/>
</dbReference>
<dbReference type="PANTHER" id="PTHR11493:SF47">
    <property type="entry name" value="SULFITE REDUCTASE [NADPH] SUBUNIT BETA"/>
    <property type="match status" value="1"/>
</dbReference>
<dbReference type="PANTHER" id="PTHR11493">
    <property type="entry name" value="SULFITE REDUCTASE [NADPH] SUBUNIT BETA-RELATED"/>
    <property type="match status" value="1"/>
</dbReference>
<dbReference type="Pfam" id="PF01077">
    <property type="entry name" value="NIR_SIR"/>
    <property type="match status" value="1"/>
</dbReference>
<dbReference type="Pfam" id="PF03460">
    <property type="entry name" value="NIR_SIR_ferr"/>
    <property type="match status" value="2"/>
</dbReference>
<dbReference type="PRINTS" id="PR00397">
    <property type="entry name" value="SIROHAEM"/>
</dbReference>
<dbReference type="SUPFAM" id="SSF56014">
    <property type="entry name" value="Nitrite and sulphite reductase 4Fe-4S domain-like"/>
    <property type="match status" value="2"/>
</dbReference>
<dbReference type="SUPFAM" id="SSF55124">
    <property type="entry name" value="Nitrite/Sulfite reductase N-terminal domain-like"/>
    <property type="match status" value="2"/>
</dbReference>
<dbReference type="PROSITE" id="PS00365">
    <property type="entry name" value="NIR_SIR"/>
    <property type="match status" value="1"/>
</dbReference>
<keyword id="KW-0004">4Fe-4S</keyword>
<keyword id="KW-0028">Amino-acid biosynthesis</keyword>
<keyword id="KW-0198">Cysteine biosynthesis</keyword>
<keyword id="KW-0349">Heme</keyword>
<keyword id="KW-0408">Iron</keyword>
<keyword id="KW-0411">Iron-sulfur</keyword>
<keyword id="KW-0479">Metal-binding</keyword>
<keyword id="KW-0521">NADP</keyword>
<keyword id="KW-0560">Oxidoreductase</keyword>
<keyword id="KW-1185">Reference proteome</keyword>
<proteinExistence type="inferred from homology"/>